<reference key="1">
    <citation type="submission" date="2006-09" db="EMBL/GenBank/DDBJ databases">
        <authorList>
            <consortium name="The Klebsiella pneumonia Genome Sequencing Project"/>
            <person name="McClelland M."/>
            <person name="Sanderson E.K."/>
            <person name="Spieth J."/>
            <person name="Clifton W.S."/>
            <person name="Latreille P."/>
            <person name="Sabo A."/>
            <person name="Pepin K."/>
            <person name="Bhonagiri V."/>
            <person name="Porwollik S."/>
            <person name="Ali J."/>
            <person name="Wilson R.K."/>
        </authorList>
    </citation>
    <scope>NUCLEOTIDE SEQUENCE [LARGE SCALE GENOMIC DNA]</scope>
    <source>
        <strain>ATCC 700721 / MGH 78578</strain>
    </source>
</reference>
<feature type="chain" id="PRO_1000069896" description="D-erythrose-4-phosphate dehydrogenase">
    <location>
        <begin position="1"/>
        <end position="342"/>
    </location>
</feature>
<feature type="active site" description="Nucleophile" evidence="1">
    <location>
        <position position="155"/>
    </location>
</feature>
<feature type="binding site" evidence="1">
    <location>
        <begin position="12"/>
        <end position="13"/>
    </location>
    <ligand>
        <name>NAD(+)</name>
        <dbReference type="ChEBI" id="CHEBI:57540"/>
    </ligand>
</feature>
<feature type="binding site" evidence="1">
    <location>
        <begin position="154"/>
        <end position="156"/>
    </location>
    <ligand>
        <name>substrate</name>
    </ligand>
</feature>
<feature type="binding site" evidence="1">
    <location>
        <position position="200"/>
    </location>
    <ligand>
        <name>substrate</name>
    </ligand>
</feature>
<feature type="binding site" evidence="1">
    <location>
        <begin position="213"/>
        <end position="214"/>
    </location>
    <ligand>
        <name>substrate</name>
    </ligand>
</feature>
<feature type="binding site" evidence="1">
    <location>
        <position position="236"/>
    </location>
    <ligand>
        <name>substrate</name>
    </ligand>
</feature>
<feature type="binding site" evidence="1">
    <location>
        <position position="318"/>
    </location>
    <ligand>
        <name>NAD(+)</name>
        <dbReference type="ChEBI" id="CHEBI:57540"/>
    </ligand>
</feature>
<feature type="site" description="Activates thiol group during catalysis" evidence="1">
    <location>
        <position position="182"/>
    </location>
</feature>
<name>E4PD_KLEP7</name>
<keyword id="KW-0963">Cytoplasm</keyword>
<keyword id="KW-0520">NAD</keyword>
<keyword id="KW-0560">Oxidoreductase</keyword>
<keyword id="KW-0664">Pyridoxine biosynthesis</keyword>
<gene>
    <name evidence="1" type="primary">epd</name>
    <name type="ordered locus">KPN78578_32920</name>
    <name type="ORF">KPN_03356</name>
</gene>
<accession>A6TDT2</accession>
<dbReference type="EC" id="1.2.1.72" evidence="1"/>
<dbReference type="EMBL" id="CP000647">
    <property type="protein sequence ID" value="ABR78753.1"/>
    <property type="molecule type" value="Genomic_DNA"/>
</dbReference>
<dbReference type="RefSeq" id="WP_015958963.1">
    <property type="nucleotide sequence ID" value="NC_009648.1"/>
</dbReference>
<dbReference type="SMR" id="A6TDT2"/>
<dbReference type="STRING" id="272620.KPN_03356"/>
<dbReference type="PaxDb" id="272620-KPN_03356"/>
<dbReference type="EnsemblBacteria" id="ABR78753">
    <property type="protein sequence ID" value="ABR78753"/>
    <property type="gene ID" value="KPN_03356"/>
</dbReference>
<dbReference type="KEGG" id="kpn:KPN_03356"/>
<dbReference type="HOGENOM" id="CLU_030140_0_0_6"/>
<dbReference type="UniPathway" id="UPA00244">
    <property type="reaction ID" value="UER00309"/>
</dbReference>
<dbReference type="Proteomes" id="UP000000265">
    <property type="component" value="Chromosome"/>
</dbReference>
<dbReference type="GO" id="GO:0005737">
    <property type="term" value="C:cytoplasm"/>
    <property type="evidence" value="ECO:0007669"/>
    <property type="project" value="UniProtKB-SubCell"/>
</dbReference>
<dbReference type="GO" id="GO:0048001">
    <property type="term" value="F:erythrose-4-phosphate dehydrogenase activity"/>
    <property type="evidence" value="ECO:0007669"/>
    <property type="project" value="UniProtKB-UniRule"/>
</dbReference>
<dbReference type="GO" id="GO:0051287">
    <property type="term" value="F:NAD binding"/>
    <property type="evidence" value="ECO:0007669"/>
    <property type="project" value="InterPro"/>
</dbReference>
<dbReference type="GO" id="GO:0042823">
    <property type="term" value="P:pyridoxal phosphate biosynthetic process"/>
    <property type="evidence" value="ECO:0007669"/>
    <property type="project" value="UniProtKB-UniRule"/>
</dbReference>
<dbReference type="GO" id="GO:0008615">
    <property type="term" value="P:pyridoxine biosynthetic process"/>
    <property type="evidence" value="ECO:0007669"/>
    <property type="project" value="UniProtKB-UniRule"/>
</dbReference>
<dbReference type="CDD" id="cd23937">
    <property type="entry name" value="GAPDH_C_E4PDH"/>
    <property type="match status" value="1"/>
</dbReference>
<dbReference type="CDD" id="cd17892">
    <property type="entry name" value="GAPDH_N_E4PDH"/>
    <property type="match status" value="1"/>
</dbReference>
<dbReference type="FunFam" id="3.30.360.10:FF:000007">
    <property type="entry name" value="D-erythrose-4-phosphate dehydrogenase"/>
    <property type="match status" value="1"/>
</dbReference>
<dbReference type="FunFam" id="3.40.50.720:FF:000001">
    <property type="entry name" value="Glyceraldehyde-3-phosphate dehydrogenase"/>
    <property type="match status" value="1"/>
</dbReference>
<dbReference type="Gene3D" id="3.30.360.10">
    <property type="entry name" value="Dihydrodipicolinate Reductase, domain 2"/>
    <property type="match status" value="1"/>
</dbReference>
<dbReference type="Gene3D" id="3.40.50.720">
    <property type="entry name" value="NAD(P)-binding Rossmann-like Domain"/>
    <property type="match status" value="1"/>
</dbReference>
<dbReference type="HAMAP" id="MF_01640">
    <property type="entry name" value="E4P_dehydrog"/>
    <property type="match status" value="1"/>
</dbReference>
<dbReference type="InterPro" id="IPR006422">
    <property type="entry name" value="E4P_DH_bac"/>
</dbReference>
<dbReference type="InterPro" id="IPR020831">
    <property type="entry name" value="GlycerAld/Erythrose_P_DH"/>
</dbReference>
<dbReference type="InterPro" id="IPR020830">
    <property type="entry name" value="GlycerAld_3-P_DH_AS"/>
</dbReference>
<dbReference type="InterPro" id="IPR020829">
    <property type="entry name" value="GlycerAld_3-P_DH_cat"/>
</dbReference>
<dbReference type="InterPro" id="IPR020828">
    <property type="entry name" value="GlycerAld_3-P_DH_NAD(P)-bd"/>
</dbReference>
<dbReference type="InterPro" id="IPR036291">
    <property type="entry name" value="NAD(P)-bd_dom_sf"/>
</dbReference>
<dbReference type="NCBIfam" id="TIGR01532">
    <property type="entry name" value="E4PD_g-proteo"/>
    <property type="match status" value="1"/>
</dbReference>
<dbReference type="NCBIfam" id="NF010058">
    <property type="entry name" value="PRK13535.1"/>
    <property type="match status" value="1"/>
</dbReference>
<dbReference type="PANTHER" id="PTHR43148">
    <property type="entry name" value="GLYCERALDEHYDE-3-PHOSPHATE DEHYDROGENASE 2"/>
    <property type="match status" value="1"/>
</dbReference>
<dbReference type="Pfam" id="PF02800">
    <property type="entry name" value="Gp_dh_C"/>
    <property type="match status" value="1"/>
</dbReference>
<dbReference type="Pfam" id="PF00044">
    <property type="entry name" value="Gp_dh_N"/>
    <property type="match status" value="1"/>
</dbReference>
<dbReference type="PIRSF" id="PIRSF000149">
    <property type="entry name" value="GAP_DH"/>
    <property type="match status" value="1"/>
</dbReference>
<dbReference type="PRINTS" id="PR00078">
    <property type="entry name" value="G3PDHDRGNASE"/>
</dbReference>
<dbReference type="SMART" id="SM00846">
    <property type="entry name" value="Gp_dh_N"/>
    <property type="match status" value="1"/>
</dbReference>
<dbReference type="SUPFAM" id="SSF55347">
    <property type="entry name" value="Glyceraldehyde-3-phosphate dehydrogenase-like, C-terminal domain"/>
    <property type="match status" value="1"/>
</dbReference>
<dbReference type="SUPFAM" id="SSF51735">
    <property type="entry name" value="NAD(P)-binding Rossmann-fold domains"/>
    <property type="match status" value="1"/>
</dbReference>
<dbReference type="PROSITE" id="PS00071">
    <property type="entry name" value="GAPDH"/>
    <property type="match status" value="1"/>
</dbReference>
<proteinExistence type="inferred from homology"/>
<protein>
    <recommendedName>
        <fullName evidence="1">D-erythrose-4-phosphate dehydrogenase</fullName>
        <shortName evidence="1">E4PDH</shortName>
        <ecNumber evidence="1">1.2.1.72</ecNumber>
    </recommendedName>
</protein>
<evidence type="ECO:0000255" key="1">
    <source>
        <dbReference type="HAMAP-Rule" id="MF_01640"/>
    </source>
</evidence>
<sequence>MTIRIAINGFGRIGRNVVRALYESGRRAEITVVAINELADAAGIAHLLKYDTSHGRFAWDVRQEREQLFVGDDSIRLLHEPTIAALPWRELAVDVVLDCTGVYGSREHGEAHLQAGAKKVLFSHPGGNDLDATVVYGVNQDELRAGHRIVSNASCTTNCIIPIIKLLDDAYGIESGTVTTIHSAMHDQQVIDAYHPDLRRTRAASQSIIPVDTKLAAGITRIFPQFNDRFEAIAVRVPTINVTAIDLSVTVKKPVKACEVNQLLQKAAQGAFHGIVDYTELPLVSTDFNHDPHSAIVDGTQTRVSGAHLIKTLVWCDNEWGFANRMLDTTLAMAAIGFRFDA</sequence>
<comment type="function">
    <text evidence="1">Catalyzes the NAD-dependent conversion of D-erythrose 4-phosphate to 4-phosphoerythronate.</text>
</comment>
<comment type="catalytic activity">
    <reaction evidence="1">
        <text>D-erythrose 4-phosphate + NAD(+) + H2O = 4-phospho-D-erythronate + NADH + 2 H(+)</text>
        <dbReference type="Rhea" id="RHEA:12056"/>
        <dbReference type="ChEBI" id="CHEBI:15377"/>
        <dbReference type="ChEBI" id="CHEBI:15378"/>
        <dbReference type="ChEBI" id="CHEBI:16897"/>
        <dbReference type="ChEBI" id="CHEBI:57540"/>
        <dbReference type="ChEBI" id="CHEBI:57945"/>
        <dbReference type="ChEBI" id="CHEBI:58766"/>
        <dbReference type="EC" id="1.2.1.72"/>
    </reaction>
</comment>
<comment type="pathway">
    <text evidence="1">Cofactor biosynthesis; pyridoxine 5'-phosphate biosynthesis; pyridoxine 5'-phosphate from D-erythrose 4-phosphate: step 1/5.</text>
</comment>
<comment type="subunit">
    <text evidence="1">Homotetramer.</text>
</comment>
<comment type="subcellular location">
    <subcellularLocation>
        <location evidence="1">Cytoplasm</location>
    </subcellularLocation>
</comment>
<comment type="similarity">
    <text evidence="1">Belongs to the glyceraldehyde-3-phosphate dehydrogenase family. Epd subfamily.</text>
</comment>
<organism>
    <name type="scientific">Klebsiella pneumoniae subsp. pneumoniae (strain ATCC 700721 / MGH 78578)</name>
    <dbReference type="NCBI Taxonomy" id="272620"/>
    <lineage>
        <taxon>Bacteria</taxon>
        <taxon>Pseudomonadati</taxon>
        <taxon>Pseudomonadota</taxon>
        <taxon>Gammaproteobacteria</taxon>
        <taxon>Enterobacterales</taxon>
        <taxon>Enterobacteriaceae</taxon>
        <taxon>Klebsiella/Raoultella group</taxon>
        <taxon>Klebsiella</taxon>
        <taxon>Klebsiella pneumoniae complex</taxon>
    </lineage>
</organism>